<comment type="function">
    <text evidence="1">Part of a sulfur-relay system required for 2-thiolation of 5-methylaminomethyl-2-thiouridine (mnm(5)s(2)U) at tRNA wobble positions.</text>
</comment>
<comment type="subunit">
    <text evidence="1">Heterohexamer, formed by a dimer of trimers. The hexameric TusBCD complex contains 2 copies each of TusB, TusC and TusD. The TusBCD complex interacts with TusE.</text>
</comment>
<comment type="subcellular location">
    <subcellularLocation>
        <location evidence="1">Cytoplasm</location>
    </subcellularLocation>
</comment>
<comment type="similarity">
    <text evidence="1">Belongs to the DsrH/TusB family.</text>
</comment>
<dbReference type="EMBL" id="CP000800">
    <property type="protein sequence ID" value="ABV20883.1"/>
    <property type="molecule type" value="Genomic_DNA"/>
</dbReference>
<dbReference type="RefSeq" id="WP_000903377.1">
    <property type="nucleotide sequence ID" value="NC_009801.1"/>
</dbReference>
<dbReference type="SMR" id="A7ZSL8"/>
<dbReference type="GeneID" id="75206286"/>
<dbReference type="KEGG" id="ecw:EcE24377A_3812"/>
<dbReference type="HOGENOM" id="CLU_166087_2_1_6"/>
<dbReference type="Proteomes" id="UP000001122">
    <property type="component" value="Chromosome"/>
</dbReference>
<dbReference type="GO" id="GO:1990228">
    <property type="term" value="C:sulfurtransferase complex"/>
    <property type="evidence" value="ECO:0007669"/>
    <property type="project" value="TreeGrafter"/>
</dbReference>
<dbReference type="GO" id="GO:0002143">
    <property type="term" value="P:tRNA wobble position uridine thiolation"/>
    <property type="evidence" value="ECO:0007669"/>
    <property type="project" value="InterPro"/>
</dbReference>
<dbReference type="FunFam" id="3.40.1260.10:FF:000002">
    <property type="entry name" value="Sulfurtransferase TusB"/>
    <property type="match status" value="1"/>
</dbReference>
<dbReference type="Gene3D" id="3.40.1260.10">
    <property type="entry name" value="DsrEFH-like"/>
    <property type="match status" value="1"/>
</dbReference>
<dbReference type="HAMAP" id="MF_01564">
    <property type="entry name" value="Thiourid_synth_B"/>
    <property type="match status" value="1"/>
</dbReference>
<dbReference type="InterPro" id="IPR027396">
    <property type="entry name" value="DsrEFH-like"/>
</dbReference>
<dbReference type="InterPro" id="IPR023526">
    <property type="entry name" value="Sulphur_relay_TusB"/>
</dbReference>
<dbReference type="InterPro" id="IPR007215">
    <property type="entry name" value="Sulphur_relay_TusB/DsrH"/>
</dbReference>
<dbReference type="NCBIfam" id="NF010035">
    <property type="entry name" value="PRK13510.1"/>
    <property type="match status" value="1"/>
</dbReference>
<dbReference type="NCBIfam" id="TIGR03011">
    <property type="entry name" value="sulf_tusB_dsrH"/>
    <property type="match status" value="1"/>
</dbReference>
<dbReference type="PANTHER" id="PTHR37526">
    <property type="entry name" value="PROTEIN TUSB"/>
    <property type="match status" value="1"/>
</dbReference>
<dbReference type="PANTHER" id="PTHR37526:SF1">
    <property type="entry name" value="PROTEIN TUSB"/>
    <property type="match status" value="1"/>
</dbReference>
<dbReference type="Pfam" id="PF04077">
    <property type="entry name" value="DsrH"/>
    <property type="match status" value="1"/>
</dbReference>
<dbReference type="SUPFAM" id="SSF75169">
    <property type="entry name" value="DsrEFH-like"/>
    <property type="match status" value="1"/>
</dbReference>
<protein>
    <recommendedName>
        <fullName evidence="1">Protein TusB</fullName>
    </recommendedName>
    <alternativeName>
        <fullName evidence="1">tRNA 2-thiouridine synthesizing protein B</fullName>
    </alternativeName>
</protein>
<sequence>MLHTLHRSPWLTDFAALLRLLSEGDELLLLQDGVTAAVDGNRYLESLRNAPIKVYALNEDLIARGLTGQISNDIIPIDYTDFVRLTVKHSSQMAW</sequence>
<name>TUSB_ECO24</name>
<feature type="chain" id="PRO_1000069052" description="Protein TusB">
    <location>
        <begin position="1"/>
        <end position="95"/>
    </location>
</feature>
<organism>
    <name type="scientific">Escherichia coli O139:H28 (strain E24377A / ETEC)</name>
    <dbReference type="NCBI Taxonomy" id="331111"/>
    <lineage>
        <taxon>Bacteria</taxon>
        <taxon>Pseudomonadati</taxon>
        <taxon>Pseudomonadota</taxon>
        <taxon>Gammaproteobacteria</taxon>
        <taxon>Enterobacterales</taxon>
        <taxon>Enterobacteriaceae</taxon>
        <taxon>Escherichia</taxon>
    </lineage>
</organism>
<gene>
    <name evidence="1" type="primary">tusB</name>
    <name type="ordered locus">EcE24377A_3812</name>
</gene>
<keyword id="KW-0963">Cytoplasm</keyword>
<keyword id="KW-1185">Reference proteome</keyword>
<keyword id="KW-0819">tRNA processing</keyword>
<evidence type="ECO:0000255" key="1">
    <source>
        <dbReference type="HAMAP-Rule" id="MF_01564"/>
    </source>
</evidence>
<reference key="1">
    <citation type="journal article" date="2008" name="J. Bacteriol.">
        <title>The pangenome structure of Escherichia coli: comparative genomic analysis of E. coli commensal and pathogenic isolates.</title>
        <authorList>
            <person name="Rasko D.A."/>
            <person name="Rosovitz M.J."/>
            <person name="Myers G.S.A."/>
            <person name="Mongodin E.F."/>
            <person name="Fricke W.F."/>
            <person name="Gajer P."/>
            <person name="Crabtree J."/>
            <person name="Sebaihia M."/>
            <person name="Thomson N.R."/>
            <person name="Chaudhuri R."/>
            <person name="Henderson I.R."/>
            <person name="Sperandio V."/>
            <person name="Ravel J."/>
        </authorList>
    </citation>
    <scope>NUCLEOTIDE SEQUENCE [LARGE SCALE GENOMIC DNA]</scope>
    <source>
        <strain>E24377A / ETEC</strain>
    </source>
</reference>
<accession>A7ZSL8</accession>
<proteinExistence type="inferred from homology"/>